<sequence>MSYKISRAAYANMFGPTTGDKVRLADTELFIEVEKDFTTYGEEVKFGGGKVIRDGMGQSQVTRANGAVDTVITNALIVDTWGIVKADVGLKNGRIAAIGKAGNPDTQPGITIIIGPSTEIIAGEGKILTAGGMDAHIHFICPQQIEEALMSGVTTMLGGGSGPAHGTLATTCTGAWHIERMIESFDAFPMNLALAGKGNASLPAALEEMVLAGACSLKLHEDWGTTPAAIDCCLSVADEYDVQVMIHTDTLNESGFVEDTIGAIKGRTIHAFHTEGAGGGHAPDIIKICGQSNVIPSSTNPTRPYTVNTIAEHLDMLMVCHHLSPSIPEDIAFAESRIRKETIAAEDILHDIGAFSIISSDSQAMGRVGEVAIRTWQTADKMKRQRGRLAQETGDNDNFRVKRYIAKYTINPAIAQGLSHEVGSIEVGKRADLVIWNPAFFGVKPEMVLLGGSIAAAPMGDPNASIPTPQPMHYRPMFAAYGKSLTNSSVTFVSQASLDAGLAGRLGVAKKLLAVKNTRGGISKASMIHNSLTPHIEVDPETYEVRADGELLTCEPATVLPMAQRYFLF</sequence>
<keyword id="KW-0963">Cytoplasm</keyword>
<keyword id="KW-0378">Hydrolase</keyword>
<keyword id="KW-0479">Metal-binding</keyword>
<keyword id="KW-0533">Nickel</keyword>
<name>URE1_RHIR8</name>
<dbReference type="EC" id="3.5.1.5" evidence="1"/>
<dbReference type="EMBL" id="CP000628">
    <property type="protein sequence ID" value="ACM27411.1"/>
    <property type="molecule type" value="Genomic_DNA"/>
</dbReference>
<dbReference type="RefSeq" id="WP_007689915.1">
    <property type="nucleotide sequence ID" value="NC_011985.1"/>
</dbReference>
<dbReference type="SMR" id="B9J8M3"/>
<dbReference type="STRING" id="311403.Arad_3467"/>
<dbReference type="MEROPS" id="M38.982"/>
<dbReference type="GeneID" id="86849293"/>
<dbReference type="KEGG" id="ara:Arad_3467"/>
<dbReference type="eggNOG" id="COG0804">
    <property type="taxonomic scope" value="Bacteria"/>
</dbReference>
<dbReference type="HOGENOM" id="CLU_000980_2_0_5"/>
<dbReference type="UniPathway" id="UPA00258">
    <property type="reaction ID" value="UER00370"/>
</dbReference>
<dbReference type="Proteomes" id="UP000001600">
    <property type="component" value="Chromosome 1"/>
</dbReference>
<dbReference type="GO" id="GO:0005737">
    <property type="term" value="C:cytoplasm"/>
    <property type="evidence" value="ECO:0007669"/>
    <property type="project" value="UniProtKB-SubCell"/>
</dbReference>
<dbReference type="GO" id="GO:0016151">
    <property type="term" value="F:nickel cation binding"/>
    <property type="evidence" value="ECO:0007669"/>
    <property type="project" value="UniProtKB-UniRule"/>
</dbReference>
<dbReference type="GO" id="GO:0009039">
    <property type="term" value="F:urease activity"/>
    <property type="evidence" value="ECO:0007669"/>
    <property type="project" value="UniProtKB-UniRule"/>
</dbReference>
<dbReference type="GO" id="GO:0043419">
    <property type="term" value="P:urea catabolic process"/>
    <property type="evidence" value="ECO:0007669"/>
    <property type="project" value="UniProtKB-UniRule"/>
</dbReference>
<dbReference type="CDD" id="cd00375">
    <property type="entry name" value="Urease_alpha"/>
    <property type="match status" value="1"/>
</dbReference>
<dbReference type="Gene3D" id="3.20.20.140">
    <property type="entry name" value="Metal-dependent hydrolases"/>
    <property type="match status" value="1"/>
</dbReference>
<dbReference type="Gene3D" id="2.30.40.10">
    <property type="entry name" value="Urease, subunit C, domain 1"/>
    <property type="match status" value="1"/>
</dbReference>
<dbReference type="HAMAP" id="MF_01953">
    <property type="entry name" value="Urease_alpha"/>
    <property type="match status" value="1"/>
</dbReference>
<dbReference type="InterPro" id="IPR006680">
    <property type="entry name" value="Amidohydro-rel"/>
</dbReference>
<dbReference type="InterPro" id="IPR011059">
    <property type="entry name" value="Metal-dep_hydrolase_composite"/>
</dbReference>
<dbReference type="InterPro" id="IPR032466">
    <property type="entry name" value="Metal_Hydrolase"/>
</dbReference>
<dbReference type="InterPro" id="IPR011612">
    <property type="entry name" value="Urease_alpha_N_dom"/>
</dbReference>
<dbReference type="InterPro" id="IPR050112">
    <property type="entry name" value="Urease_alpha_subunit"/>
</dbReference>
<dbReference type="InterPro" id="IPR017950">
    <property type="entry name" value="Urease_AS"/>
</dbReference>
<dbReference type="InterPro" id="IPR005848">
    <property type="entry name" value="Urease_asu"/>
</dbReference>
<dbReference type="InterPro" id="IPR017951">
    <property type="entry name" value="Urease_asu_c"/>
</dbReference>
<dbReference type="InterPro" id="IPR029754">
    <property type="entry name" value="Urease_Ni-bd"/>
</dbReference>
<dbReference type="NCBIfam" id="NF009685">
    <property type="entry name" value="PRK13206.1"/>
    <property type="match status" value="1"/>
</dbReference>
<dbReference type="NCBIfam" id="NF009686">
    <property type="entry name" value="PRK13207.1"/>
    <property type="match status" value="1"/>
</dbReference>
<dbReference type="NCBIfam" id="TIGR01792">
    <property type="entry name" value="urease_alph"/>
    <property type="match status" value="1"/>
</dbReference>
<dbReference type="PANTHER" id="PTHR43440">
    <property type="entry name" value="UREASE"/>
    <property type="match status" value="1"/>
</dbReference>
<dbReference type="PANTHER" id="PTHR43440:SF1">
    <property type="entry name" value="UREASE"/>
    <property type="match status" value="1"/>
</dbReference>
<dbReference type="Pfam" id="PF01979">
    <property type="entry name" value="Amidohydro_1"/>
    <property type="match status" value="1"/>
</dbReference>
<dbReference type="Pfam" id="PF00449">
    <property type="entry name" value="Urease_alpha"/>
    <property type="match status" value="1"/>
</dbReference>
<dbReference type="PRINTS" id="PR01752">
    <property type="entry name" value="UREASE"/>
</dbReference>
<dbReference type="SUPFAM" id="SSF51338">
    <property type="entry name" value="Composite domain of metallo-dependent hydrolases"/>
    <property type="match status" value="2"/>
</dbReference>
<dbReference type="SUPFAM" id="SSF51556">
    <property type="entry name" value="Metallo-dependent hydrolases"/>
    <property type="match status" value="1"/>
</dbReference>
<dbReference type="PROSITE" id="PS01120">
    <property type="entry name" value="UREASE_1"/>
    <property type="match status" value="1"/>
</dbReference>
<dbReference type="PROSITE" id="PS00145">
    <property type="entry name" value="UREASE_2"/>
    <property type="match status" value="1"/>
</dbReference>
<dbReference type="PROSITE" id="PS51368">
    <property type="entry name" value="UREASE_3"/>
    <property type="match status" value="1"/>
</dbReference>
<accession>B9J8M3</accession>
<feature type="chain" id="PRO_1000188857" description="Urease subunit alpha">
    <location>
        <begin position="1"/>
        <end position="569"/>
    </location>
</feature>
<feature type="domain" description="Urease" evidence="1">
    <location>
        <begin position="131"/>
        <end position="569"/>
    </location>
</feature>
<feature type="active site" description="Proton donor" evidence="1">
    <location>
        <position position="321"/>
    </location>
</feature>
<feature type="binding site" evidence="1">
    <location>
        <position position="136"/>
    </location>
    <ligand>
        <name>Ni(2+)</name>
        <dbReference type="ChEBI" id="CHEBI:49786"/>
        <label>1</label>
    </ligand>
</feature>
<feature type="binding site" evidence="1">
    <location>
        <position position="138"/>
    </location>
    <ligand>
        <name>Ni(2+)</name>
        <dbReference type="ChEBI" id="CHEBI:49786"/>
        <label>1</label>
    </ligand>
</feature>
<feature type="binding site" description="via carbamate group" evidence="1">
    <location>
        <position position="218"/>
    </location>
    <ligand>
        <name>Ni(2+)</name>
        <dbReference type="ChEBI" id="CHEBI:49786"/>
        <label>1</label>
    </ligand>
</feature>
<feature type="binding site" description="via carbamate group" evidence="1">
    <location>
        <position position="218"/>
    </location>
    <ligand>
        <name>Ni(2+)</name>
        <dbReference type="ChEBI" id="CHEBI:49786"/>
        <label>2</label>
    </ligand>
</feature>
<feature type="binding site" evidence="1">
    <location>
        <position position="220"/>
    </location>
    <ligand>
        <name>substrate</name>
    </ligand>
</feature>
<feature type="binding site" evidence="1">
    <location>
        <position position="247"/>
    </location>
    <ligand>
        <name>Ni(2+)</name>
        <dbReference type="ChEBI" id="CHEBI:49786"/>
        <label>2</label>
    </ligand>
</feature>
<feature type="binding site" evidence="1">
    <location>
        <position position="273"/>
    </location>
    <ligand>
        <name>Ni(2+)</name>
        <dbReference type="ChEBI" id="CHEBI:49786"/>
        <label>2</label>
    </ligand>
</feature>
<feature type="binding site" evidence="1">
    <location>
        <position position="361"/>
    </location>
    <ligand>
        <name>Ni(2+)</name>
        <dbReference type="ChEBI" id="CHEBI:49786"/>
        <label>1</label>
    </ligand>
</feature>
<feature type="modified residue" description="N6-carboxylysine" evidence="1">
    <location>
        <position position="218"/>
    </location>
</feature>
<evidence type="ECO:0000255" key="1">
    <source>
        <dbReference type="HAMAP-Rule" id="MF_01953"/>
    </source>
</evidence>
<proteinExistence type="inferred from homology"/>
<organism>
    <name type="scientific">Rhizobium rhizogenes (strain K84 / ATCC BAA-868)</name>
    <name type="common">Agrobacterium radiobacter</name>
    <dbReference type="NCBI Taxonomy" id="311403"/>
    <lineage>
        <taxon>Bacteria</taxon>
        <taxon>Pseudomonadati</taxon>
        <taxon>Pseudomonadota</taxon>
        <taxon>Alphaproteobacteria</taxon>
        <taxon>Hyphomicrobiales</taxon>
        <taxon>Rhizobiaceae</taxon>
        <taxon>Rhizobium/Agrobacterium group</taxon>
        <taxon>Rhizobium</taxon>
    </lineage>
</organism>
<gene>
    <name evidence="1" type="primary">ureC</name>
    <name type="ordered locus">Arad_3467</name>
</gene>
<comment type="catalytic activity">
    <reaction evidence="1">
        <text>urea + 2 H2O + H(+) = hydrogencarbonate + 2 NH4(+)</text>
        <dbReference type="Rhea" id="RHEA:20557"/>
        <dbReference type="ChEBI" id="CHEBI:15377"/>
        <dbReference type="ChEBI" id="CHEBI:15378"/>
        <dbReference type="ChEBI" id="CHEBI:16199"/>
        <dbReference type="ChEBI" id="CHEBI:17544"/>
        <dbReference type="ChEBI" id="CHEBI:28938"/>
        <dbReference type="EC" id="3.5.1.5"/>
    </reaction>
</comment>
<comment type="cofactor">
    <cofactor evidence="1">
        <name>Ni cation</name>
        <dbReference type="ChEBI" id="CHEBI:25516"/>
    </cofactor>
    <text evidence="1">Binds 2 nickel ions per subunit.</text>
</comment>
<comment type="pathway">
    <text evidence="1">Nitrogen metabolism; urea degradation; CO(2) and NH(3) from urea (urease route): step 1/1.</text>
</comment>
<comment type="subunit">
    <text evidence="1">Heterotrimer of UreA (gamma), UreB (beta) and UreC (alpha) subunits. Three heterotrimers associate to form the active enzyme.</text>
</comment>
<comment type="subcellular location">
    <subcellularLocation>
        <location evidence="1">Cytoplasm</location>
    </subcellularLocation>
</comment>
<comment type="PTM">
    <text evidence="1">Carboxylation allows a single lysine to coordinate two nickel ions.</text>
</comment>
<comment type="similarity">
    <text evidence="1">Belongs to the metallo-dependent hydrolases superfamily. Urease alpha subunit family.</text>
</comment>
<protein>
    <recommendedName>
        <fullName evidence="1">Urease subunit alpha</fullName>
        <ecNumber evidence="1">3.5.1.5</ecNumber>
    </recommendedName>
    <alternativeName>
        <fullName evidence="1">Urea amidohydrolase subunit alpha</fullName>
    </alternativeName>
</protein>
<reference key="1">
    <citation type="journal article" date="2009" name="J. Bacteriol.">
        <title>Genome sequences of three Agrobacterium biovars help elucidate the evolution of multichromosome genomes in bacteria.</title>
        <authorList>
            <person name="Slater S.C."/>
            <person name="Goldman B.S."/>
            <person name="Goodner B."/>
            <person name="Setubal J.C."/>
            <person name="Farrand S.K."/>
            <person name="Nester E.W."/>
            <person name="Burr T.J."/>
            <person name="Banta L."/>
            <person name="Dickerman A.W."/>
            <person name="Paulsen I."/>
            <person name="Otten L."/>
            <person name="Suen G."/>
            <person name="Welch R."/>
            <person name="Almeida N.F."/>
            <person name="Arnold F."/>
            <person name="Burton O.T."/>
            <person name="Du Z."/>
            <person name="Ewing A."/>
            <person name="Godsy E."/>
            <person name="Heisel S."/>
            <person name="Houmiel K.L."/>
            <person name="Jhaveri J."/>
            <person name="Lu J."/>
            <person name="Miller N.M."/>
            <person name="Norton S."/>
            <person name="Chen Q."/>
            <person name="Phoolcharoen W."/>
            <person name="Ohlin V."/>
            <person name="Ondrusek D."/>
            <person name="Pride N."/>
            <person name="Stricklin S.L."/>
            <person name="Sun J."/>
            <person name="Wheeler C."/>
            <person name="Wilson L."/>
            <person name="Zhu H."/>
            <person name="Wood D.W."/>
        </authorList>
    </citation>
    <scope>NUCLEOTIDE SEQUENCE [LARGE SCALE GENOMIC DNA]</scope>
    <source>
        <strain>K84 / ATCC BAA-868</strain>
    </source>
</reference>